<proteinExistence type="inferred from homology"/>
<dbReference type="EC" id="5.4.99.62" evidence="1"/>
<dbReference type="EMBL" id="CP000026">
    <property type="protein sequence ID" value="AAV79512.1"/>
    <property type="molecule type" value="Genomic_DNA"/>
</dbReference>
<dbReference type="RefSeq" id="WP_000715944.1">
    <property type="nucleotide sequence ID" value="NC_006511.1"/>
</dbReference>
<dbReference type="SMR" id="Q5PJX6"/>
<dbReference type="KEGG" id="spt:SPA3720"/>
<dbReference type="HOGENOM" id="CLU_135498_0_0_6"/>
<dbReference type="UniPathway" id="UPA00916">
    <property type="reaction ID" value="UER00888"/>
</dbReference>
<dbReference type="Proteomes" id="UP000008185">
    <property type="component" value="Chromosome"/>
</dbReference>
<dbReference type="GO" id="GO:0005829">
    <property type="term" value="C:cytosol"/>
    <property type="evidence" value="ECO:0007669"/>
    <property type="project" value="TreeGrafter"/>
</dbReference>
<dbReference type="GO" id="GO:0062193">
    <property type="term" value="F:D-ribose pyranase activity"/>
    <property type="evidence" value="ECO:0007669"/>
    <property type="project" value="UniProtKB-EC"/>
</dbReference>
<dbReference type="GO" id="GO:0016872">
    <property type="term" value="F:intramolecular lyase activity"/>
    <property type="evidence" value="ECO:0007669"/>
    <property type="project" value="UniProtKB-UniRule"/>
</dbReference>
<dbReference type="GO" id="GO:0048029">
    <property type="term" value="F:monosaccharide binding"/>
    <property type="evidence" value="ECO:0007669"/>
    <property type="project" value="InterPro"/>
</dbReference>
<dbReference type="GO" id="GO:0019303">
    <property type="term" value="P:D-ribose catabolic process"/>
    <property type="evidence" value="ECO:0007669"/>
    <property type="project" value="UniProtKB-UniRule"/>
</dbReference>
<dbReference type="FunFam" id="3.40.1650.10:FF:000002">
    <property type="entry name" value="D-ribose pyranase"/>
    <property type="match status" value="1"/>
</dbReference>
<dbReference type="Gene3D" id="3.40.1650.10">
    <property type="entry name" value="RbsD-like domain"/>
    <property type="match status" value="1"/>
</dbReference>
<dbReference type="HAMAP" id="MF_01661">
    <property type="entry name" value="D_rib_pyranase"/>
    <property type="match status" value="1"/>
</dbReference>
<dbReference type="InterPro" id="IPR023064">
    <property type="entry name" value="D-ribose_pyranase"/>
</dbReference>
<dbReference type="InterPro" id="IPR023750">
    <property type="entry name" value="RbsD-like_sf"/>
</dbReference>
<dbReference type="InterPro" id="IPR007721">
    <property type="entry name" value="RbsD_FucU"/>
</dbReference>
<dbReference type="NCBIfam" id="NF008761">
    <property type="entry name" value="PRK11797.1"/>
    <property type="match status" value="1"/>
</dbReference>
<dbReference type="PANTHER" id="PTHR37831">
    <property type="entry name" value="D-RIBOSE PYRANASE"/>
    <property type="match status" value="1"/>
</dbReference>
<dbReference type="PANTHER" id="PTHR37831:SF1">
    <property type="entry name" value="D-RIBOSE PYRANASE"/>
    <property type="match status" value="1"/>
</dbReference>
<dbReference type="Pfam" id="PF05025">
    <property type="entry name" value="RbsD_FucU"/>
    <property type="match status" value="1"/>
</dbReference>
<dbReference type="SUPFAM" id="SSF102546">
    <property type="entry name" value="RbsD-like"/>
    <property type="match status" value="1"/>
</dbReference>
<accession>Q5PJX6</accession>
<reference key="1">
    <citation type="journal article" date="2004" name="Nat. Genet.">
        <title>Comparison of genome degradation in Paratyphi A and Typhi, human-restricted serovars of Salmonella enterica that cause typhoid.</title>
        <authorList>
            <person name="McClelland M."/>
            <person name="Sanderson K.E."/>
            <person name="Clifton S.W."/>
            <person name="Latreille P."/>
            <person name="Porwollik S."/>
            <person name="Sabo A."/>
            <person name="Meyer R."/>
            <person name="Bieri T."/>
            <person name="Ozersky P."/>
            <person name="McLellan M."/>
            <person name="Harkins C.R."/>
            <person name="Wang C."/>
            <person name="Nguyen C."/>
            <person name="Berghoff A."/>
            <person name="Elliott G."/>
            <person name="Kohlberg S."/>
            <person name="Strong C."/>
            <person name="Du F."/>
            <person name="Carter J."/>
            <person name="Kremizki C."/>
            <person name="Layman D."/>
            <person name="Leonard S."/>
            <person name="Sun H."/>
            <person name="Fulton L."/>
            <person name="Nash W."/>
            <person name="Miner T."/>
            <person name="Minx P."/>
            <person name="Delehaunty K."/>
            <person name="Fronick C."/>
            <person name="Magrini V."/>
            <person name="Nhan M."/>
            <person name="Warren W."/>
            <person name="Florea L."/>
            <person name="Spieth J."/>
            <person name="Wilson R.K."/>
        </authorList>
    </citation>
    <scope>NUCLEOTIDE SEQUENCE [LARGE SCALE GENOMIC DNA]</scope>
    <source>
        <strain>ATCC 9150 / SARB42</strain>
    </source>
</reference>
<comment type="function">
    <text evidence="1">Catalyzes the interconversion of beta-pyran and beta-furan forms of D-ribose.</text>
</comment>
<comment type="catalytic activity">
    <reaction evidence="1">
        <text>beta-D-ribopyranose = beta-D-ribofuranose</text>
        <dbReference type="Rhea" id="RHEA:25432"/>
        <dbReference type="ChEBI" id="CHEBI:27476"/>
        <dbReference type="ChEBI" id="CHEBI:47002"/>
        <dbReference type="EC" id="5.4.99.62"/>
    </reaction>
</comment>
<comment type="pathway">
    <text evidence="1">Carbohydrate metabolism; D-ribose degradation; D-ribose 5-phosphate from beta-D-ribopyranose: step 1/2.</text>
</comment>
<comment type="subunit">
    <text evidence="1">Homodecamer.</text>
</comment>
<comment type="subcellular location">
    <subcellularLocation>
        <location evidence="1">Cytoplasm</location>
    </subcellularLocation>
</comment>
<comment type="similarity">
    <text evidence="1">Belongs to the RbsD / FucU family. RbsD subfamily.</text>
</comment>
<gene>
    <name evidence="1" type="primary">rbsD</name>
    <name type="ordered locus">SPA3720</name>
</gene>
<name>RBSD_SALPA</name>
<keyword id="KW-0119">Carbohydrate metabolism</keyword>
<keyword id="KW-0963">Cytoplasm</keyword>
<keyword id="KW-0413">Isomerase</keyword>
<evidence type="ECO:0000255" key="1">
    <source>
        <dbReference type="HAMAP-Rule" id="MF_01661"/>
    </source>
</evidence>
<organism>
    <name type="scientific">Salmonella paratyphi A (strain ATCC 9150 / SARB42)</name>
    <dbReference type="NCBI Taxonomy" id="295319"/>
    <lineage>
        <taxon>Bacteria</taxon>
        <taxon>Pseudomonadati</taxon>
        <taxon>Pseudomonadota</taxon>
        <taxon>Gammaproteobacteria</taxon>
        <taxon>Enterobacterales</taxon>
        <taxon>Enterobacteriaceae</taxon>
        <taxon>Salmonella</taxon>
    </lineage>
</organism>
<sequence>MKKGTVLNSEISSVISRLGHTDTLVVCDAGLPIPNSTARIDMALTQGVPSFMQVVDVVTREMQVEAAILATEIKQQNPQLHETLLTHLEQLQQHQGNTIKISYTTHEQFKKLTADSQAVIRSGECSPYANVILCAGVTF</sequence>
<feature type="chain" id="PRO_0000346250" description="D-ribose pyranase">
    <location>
        <begin position="1"/>
        <end position="139"/>
    </location>
</feature>
<feature type="active site" description="Proton donor" evidence="1">
    <location>
        <position position="20"/>
    </location>
</feature>
<feature type="binding site" evidence="1">
    <location>
        <position position="28"/>
    </location>
    <ligand>
        <name>substrate</name>
    </ligand>
</feature>
<feature type="binding site" evidence="1">
    <location>
        <position position="106"/>
    </location>
    <ligand>
        <name>substrate</name>
    </ligand>
</feature>
<feature type="binding site" evidence="1">
    <location>
        <begin position="128"/>
        <end position="130"/>
    </location>
    <ligand>
        <name>substrate</name>
    </ligand>
</feature>
<protein>
    <recommendedName>
        <fullName evidence="1">D-ribose pyranase</fullName>
        <ecNumber evidence="1">5.4.99.62</ecNumber>
    </recommendedName>
</protein>